<feature type="chain" id="PRO_0000057981" description="Protein NUD1">
    <location>
        <begin position="1"/>
        <end position="851"/>
    </location>
</feature>
<feature type="repeat" description="LRR 1">
    <location>
        <begin position="544"/>
        <end position="566"/>
    </location>
</feature>
<feature type="repeat" description="LRR 2">
    <location>
        <begin position="567"/>
        <end position="588"/>
    </location>
</feature>
<feature type="repeat" description="LRR 3">
    <location>
        <begin position="589"/>
        <end position="609"/>
    </location>
</feature>
<feature type="repeat" description="LRR 4">
    <location>
        <begin position="621"/>
        <end position="642"/>
    </location>
</feature>
<feature type="repeat" description="LRR 5">
    <location>
        <begin position="643"/>
        <end position="664"/>
    </location>
</feature>
<feature type="region of interest" description="Disordered" evidence="1">
    <location>
        <begin position="1"/>
        <end position="31"/>
    </location>
</feature>
<feature type="region of interest" description="Disordered" evidence="1">
    <location>
        <begin position="216"/>
        <end position="352"/>
    </location>
</feature>
<feature type="compositionally biased region" description="Polar residues" evidence="1">
    <location>
        <begin position="8"/>
        <end position="21"/>
    </location>
</feature>
<feature type="compositionally biased region" description="Low complexity" evidence="1">
    <location>
        <begin position="223"/>
        <end position="246"/>
    </location>
</feature>
<feature type="compositionally biased region" description="Low complexity" evidence="1">
    <location>
        <begin position="260"/>
        <end position="278"/>
    </location>
</feature>
<feature type="compositionally biased region" description="Polar residues" evidence="1">
    <location>
        <begin position="291"/>
        <end position="304"/>
    </location>
</feature>
<feature type="compositionally biased region" description="Low complexity" evidence="1">
    <location>
        <begin position="320"/>
        <end position="333"/>
    </location>
</feature>
<feature type="modified residue" description="Phosphothreonine" evidence="12">
    <location>
        <position position="388"/>
    </location>
</feature>
<feature type="modified residue" description="Phosphothreonine" evidence="12">
    <location>
        <position position="392"/>
    </location>
</feature>
<feature type="modified residue" description="Phosphoserine" evidence="11">
    <location>
        <position position="417"/>
    </location>
</feature>
<feature type="modified residue" description="Phosphoserine" evidence="11">
    <location>
        <position position="419"/>
    </location>
</feature>
<feature type="cross-link" description="Glycyl lysine isopeptide (Lys-Gly) (interchain with G-Cter in ubiquitin)" evidence="13">
    <location>
        <position position="357"/>
    </location>
</feature>
<feature type="sequence conflict" description="In Ref. 2; CAA44073." evidence="10" ref="2">
    <original>TQ</original>
    <variation>SE</variation>
    <location>
        <begin position="5"/>
        <end position="6"/>
    </location>
</feature>
<organism>
    <name type="scientific">Saccharomyces cerevisiae (strain ATCC 204508 / S288c)</name>
    <name type="common">Baker's yeast</name>
    <dbReference type="NCBI Taxonomy" id="559292"/>
    <lineage>
        <taxon>Eukaryota</taxon>
        <taxon>Fungi</taxon>
        <taxon>Dikarya</taxon>
        <taxon>Ascomycota</taxon>
        <taxon>Saccharomycotina</taxon>
        <taxon>Saccharomycetes</taxon>
        <taxon>Saccharomycetales</taxon>
        <taxon>Saccharomycetaceae</taxon>
        <taxon>Saccharomyces</taxon>
    </lineage>
</organism>
<evidence type="ECO:0000256" key="1">
    <source>
        <dbReference type="SAM" id="MobiDB-lite"/>
    </source>
</evidence>
<evidence type="ECO:0000269" key="2">
    <source>
    </source>
</evidence>
<evidence type="ECO:0000269" key="3">
    <source>
    </source>
</evidence>
<evidence type="ECO:0000269" key="4">
    <source>
    </source>
</evidence>
<evidence type="ECO:0000269" key="5">
    <source>
    </source>
</evidence>
<evidence type="ECO:0000269" key="6">
    <source>
    </source>
</evidence>
<evidence type="ECO:0000269" key="7">
    <source>
    </source>
</evidence>
<evidence type="ECO:0000269" key="8">
    <source>
    </source>
</evidence>
<evidence type="ECO:0000269" key="9">
    <source>
    </source>
</evidence>
<evidence type="ECO:0000305" key="10"/>
<evidence type="ECO:0007744" key="11">
    <source>
    </source>
</evidence>
<evidence type="ECO:0007744" key="12">
    <source>
    </source>
</evidence>
<evidence type="ECO:0007744" key="13">
    <source>
    </source>
</evidence>
<proteinExistence type="evidence at protein level"/>
<reference key="1">
    <citation type="submission" date="1991-09" db="EMBL/GenBank/DDBJ databases">
        <title>NUD1, a cell-cycle regulated gene required for nuclear division in Saccharomyces cerevisiae.</title>
        <authorList>
            <person name="Dulic V."/>
            <person name="Zanolari B."/>
            <person name="Riezman H."/>
        </authorList>
    </citation>
    <scope>NUCLEOTIDE SEQUENCE [GENOMIC DNA]</scope>
</reference>
<reference key="2">
    <citation type="journal article" date="1997" name="Nature">
        <title>The nucleotide sequence of Saccharomyces cerevisiae chromosome XV.</title>
        <authorList>
            <person name="Dujon B."/>
            <person name="Albermann K."/>
            <person name="Aldea M."/>
            <person name="Alexandraki D."/>
            <person name="Ansorge W."/>
            <person name="Arino J."/>
            <person name="Benes V."/>
            <person name="Bohn C."/>
            <person name="Bolotin-Fukuhara M."/>
            <person name="Bordonne R."/>
            <person name="Boyer J."/>
            <person name="Camasses A."/>
            <person name="Casamayor A."/>
            <person name="Casas C."/>
            <person name="Cheret G."/>
            <person name="Cziepluch C."/>
            <person name="Daignan-Fornier B."/>
            <person name="Dang V.-D."/>
            <person name="de Haan M."/>
            <person name="Delius H."/>
            <person name="Durand P."/>
            <person name="Fairhead C."/>
            <person name="Feldmann H."/>
            <person name="Gaillon L."/>
            <person name="Galisson F."/>
            <person name="Gamo F.-J."/>
            <person name="Gancedo C."/>
            <person name="Goffeau A."/>
            <person name="Goulding S.E."/>
            <person name="Grivell L.A."/>
            <person name="Habbig B."/>
            <person name="Hand N.J."/>
            <person name="Hani J."/>
            <person name="Hattenhorst U."/>
            <person name="Hebling U."/>
            <person name="Hernando Y."/>
            <person name="Herrero E."/>
            <person name="Heumann K."/>
            <person name="Hiesel R."/>
            <person name="Hilger F."/>
            <person name="Hofmann B."/>
            <person name="Hollenberg C.P."/>
            <person name="Hughes B."/>
            <person name="Jauniaux J.-C."/>
            <person name="Kalogeropoulos A."/>
            <person name="Katsoulou C."/>
            <person name="Kordes E."/>
            <person name="Lafuente M.J."/>
            <person name="Landt O."/>
            <person name="Louis E.J."/>
            <person name="Maarse A.C."/>
            <person name="Madania A."/>
            <person name="Mannhaupt G."/>
            <person name="Marck C."/>
            <person name="Martin R.P."/>
            <person name="Mewes H.-W."/>
            <person name="Michaux G."/>
            <person name="Paces V."/>
            <person name="Parle-McDermott A.G."/>
            <person name="Pearson B.M."/>
            <person name="Perrin A."/>
            <person name="Pettersson B."/>
            <person name="Poch O."/>
            <person name="Pohl T.M."/>
            <person name="Poirey R."/>
            <person name="Portetelle D."/>
            <person name="Pujol A."/>
            <person name="Purnelle B."/>
            <person name="Ramezani Rad M."/>
            <person name="Rechmann S."/>
            <person name="Schwager C."/>
            <person name="Schweizer M."/>
            <person name="Sor F."/>
            <person name="Sterky F."/>
            <person name="Tarassov I.A."/>
            <person name="Teodoru C."/>
            <person name="Tettelin H."/>
            <person name="Thierry A."/>
            <person name="Tobiasch E."/>
            <person name="Tzermia M."/>
            <person name="Uhlen M."/>
            <person name="Unseld M."/>
            <person name="Valens M."/>
            <person name="Vandenbol M."/>
            <person name="Vetter I."/>
            <person name="Vlcek C."/>
            <person name="Voet M."/>
            <person name="Volckaert G."/>
            <person name="Voss H."/>
            <person name="Wambutt R."/>
            <person name="Wedler H."/>
            <person name="Wiemann S."/>
            <person name="Winsor B."/>
            <person name="Wolfe K.H."/>
            <person name="Zollner A."/>
            <person name="Zumstein E."/>
            <person name="Kleine K."/>
        </authorList>
    </citation>
    <scope>NUCLEOTIDE SEQUENCE [LARGE SCALE GENOMIC DNA]</scope>
    <source>
        <strain>ATCC 204508 / S288c</strain>
    </source>
</reference>
<reference key="3">
    <citation type="journal article" date="2014" name="G3 (Bethesda)">
        <title>The reference genome sequence of Saccharomyces cerevisiae: Then and now.</title>
        <authorList>
            <person name="Engel S.R."/>
            <person name="Dietrich F.S."/>
            <person name="Fisk D.G."/>
            <person name="Binkley G."/>
            <person name="Balakrishnan R."/>
            <person name="Costanzo M.C."/>
            <person name="Dwight S.S."/>
            <person name="Hitz B.C."/>
            <person name="Karra K."/>
            <person name="Nash R.S."/>
            <person name="Weng S."/>
            <person name="Wong E.D."/>
            <person name="Lloyd P."/>
            <person name="Skrzypek M.S."/>
            <person name="Miyasato S.R."/>
            <person name="Simison M."/>
            <person name="Cherry J.M."/>
        </authorList>
    </citation>
    <scope>GENOME REANNOTATION</scope>
    <source>
        <strain>ATCC 204508 / S288c</strain>
    </source>
</reference>
<reference key="4">
    <citation type="journal article" date="1998" name="J. Cell Biol.">
        <title>Analysis of the Saccharomyces spindle pole by matrix-assisted laser desorption/ionization (MALDI) mass spectrometry.</title>
        <authorList>
            <person name="Wigge P.A."/>
            <person name="Jensen O.N."/>
            <person name="Holmes S."/>
            <person name="Soues S."/>
            <person name="Mann M."/>
            <person name="Kilmartin J.V."/>
        </authorList>
    </citation>
    <scope>IDENTIFICATION BY MASS SPECTROMETRY IN SPINDLE POLE BODY</scope>
</reference>
<reference key="5">
    <citation type="journal article" date="1998" name="Mol. Biol. Cell">
        <title>Saccharomyces cerevisiae cells with defective spindle pole body outer plaques accomplish nuclear migration via half-bridge-organized microtubules.</title>
        <authorList>
            <person name="Brachat A."/>
            <person name="Kilmartin J.V."/>
            <person name="Wach A."/>
            <person name="Philippsen P."/>
        </authorList>
    </citation>
    <scope>INTERACTION WITH CNM67</scope>
</reference>
<reference key="6">
    <citation type="journal article" date="1999" name="J. Cell Biol.">
        <title>Localization of core spindle pole body (SPB) components during SPB duplication in Saccharomyces cerevisiae.</title>
        <authorList>
            <person name="Adams I.R."/>
            <person name="Kilmartin J.V."/>
        </authorList>
    </citation>
    <scope>SUBCELLULAR LOCATION</scope>
</reference>
<reference key="7">
    <citation type="journal article" date="2000" name="EMBO J.">
        <title>Nud1p links astral microtubule organization and the control of exit from mitosis.</title>
        <authorList>
            <person name="Gruneberg U."/>
            <person name="Campbell K."/>
            <person name="Simpson C."/>
            <person name="Grindlay J."/>
            <person name="Schiebel E."/>
        </authorList>
    </citation>
    <scope>FUNCTION</scope>
    <scope>PHOSPHORYLATION</scope>
    <scope>INTERACTION WITH SPC72</scope>
</reference>
<reference key="8">
    <citation type="journal article" date="2001" name="EMBO J.">
        <authorList>
            <person name="Gruneberg U."/>
            <person name="Campbell K."/>
            <person name="Simpson C."/>
            <person name="Grindlay J."/>
            <person name="Schiebel E."/>
        </authorList>
    </citation>
    <scope>ERRATUM OF PUBMED:11101520</scope>
</reference>
<reference key="9">
    <citation type="journal article" date="2000" name="EMBO J.">
        <title>Role of the spindle pole body of yeast in mediating assembly of the prospore membrane during meiosis.</title>
        <authorList>
            <person name="Knop M."/>
            <person name="Strasser K."/>
        </authorList>
    </citation>
    <scope>INTERACTION WITH MPC54 AND SPO21</scope>
</reference>
<reference key="10">
    <citation type="journal article" date="2001" name="EMBO J.">
        <title>Prospore membrane formation linked to the leading edge protein (LEP) coat assembly.</title>
        <authorList>
            <person name="Moreno-Borchart A.C."/>
            <person name="Strasser K."/>
            <person name="Finkbeiner M.G."/>
            <person name="Shevchenko A."/>
            <person name="Shevchenko A."/>
            <person name="Knop M."/>
        </authorList>
    </citation>
    <scope>COMPOSITION OF A SPB COMPLEX</scope>
    <scope>INTERACTION WITH ADY3</scope>
</reference>
<reference key="11">
    <citation type="journal article" date="2002" name="Genetics">
        <title>Ady3p links spindle pole body function to spore wall synthesis in Saccharomyces cerevisiae.</title>
        <authorList>
            <person name="Nickas M.E."/>
            <person name="Neiman A.M."/>
        </authorList>
    </citation>
    <scope>INTERACTION WITH ADY3</scope>
</reference>
<reference key="12">
    <citation type="journal article" date="2003" name="Eukaryot. Cell">
        <title>Ady4p and Spo74p are components of the meiotic spindle pole body that promote growth of the prospore membrane in Saccharomyces cerevisiae.</title>
        <authorList>
            <person name="Nickas M.E."/>
            <person name="Schwartz C."/>
            <person name="Neiman A.M."/>
        </authorList>
    </citation>
    <scope>INTERACTION WITH ADY4</scope>
</reference>
<reference key="13">
    <citation type="journal article" date="2003" name="Nature">
        <title>Global analysis of protein expression in yeast.</title>
        <authorList>
            <person name="Ghaemmaghami S."/>
            <person name="Huh W.-K."/>
            <person name="Bower K."/>
            <person name="Howson R.W."/>
            <person name="Belle A."/>
            <person name="Dephoure N."/>
            <person name="O'Shea E.K."/>
            <person name="Weissman J.S."/>
        </authorList>
    </citation>
    <scope>LEVEL OF PROTEIN EXPRESSION [LARGE SCALE ANALYSIS]</scope>
</reference>
<reference key="14">
    <citation type="journal article" date="2007" name="Proc. Natl. Acad. Sci. U.S.A.">
        <title>Analysis of phosphorylation sites on proteins from Saccharomyces cerevisiae by electron transfer dissociation (ETD) mass spectrometry.</title>
        <authorList>
            <person name="Chi A."/>
            <person name="Huttenhower C."/>
            <person name="Geer L.Y."/>
            <person name="Coon J.J."/>
            <person name="Syka J.E.P."/>
            <person name="Bai D.L."/>
            <person name="Shabanowitz J."/>
            <person name="Burke D.J."/>
            <person name="Troyanskaya O.G."/>
            <person name="Hunt D.F."/>
        </authorList>
    </citation>
    <scope>PHOSPHORYLATION [LARGE SCALE ANALYSIS] AT SER-417 AND SER-419</scope>
    <scope>IDENTIFICATION BY MASS SPECTROMETRY [LARGE SCALE ANALYSIS]</scope>
</reference>
<reference key="15">
    <citation type="journal article" date="2008" name="Mol. Cell. Proteomics">
        <title>A multidimensional chromatography technology for in-depth phosphoproteome analysis.</title>
        <authorList>
            <person name="Albuquerque C.P."/>
            <person name="Smolka M.B."/>
            <person name="Payne S.H."/>
            <person name="Bafna V."/>
            <person name="Eng J."/>
            <person name="Zhou H."/>
        </authorList>
    </citation>
    <scope>IDENTIFICATION BY MASS SPECTROMETRY [LARGE SCALE ANALYSIS]</scope>
</reference>
<reference key="16">
    <citation type="journal article" date="2009" name="Science">
        <title>Global analysis of Cdk1 substrate phosphorylation sites provides insights into evolution.</title>
        <authorList>
            <person name="Holt L.J."/>
            <person name="Tuch B.B."/>
            <person name="Villen J."/>
            <person name="Johnson A.D."/>
            <person name="Gygi S.P."/>
            <person name="Morgan D.O."/>
        </authorList>
    </citation>
    <scope>PHOSPHORYLATION [LARGE SCALE ANALYSIS] AT THR-388 AND THR-392</scope>
    <scope>IDENTIFICATION BY MASS SPECTROMETRY [LARGE SCALE ANALYSIS]</scope>
</reference>
<reference key="17">
    <citation type="journal article" date="2012" name="Proteomics">
        <title>Sites of ubiquitin attachment in Saccharomyces cerevisiae.</title>
        <authorList>
            <person name="Starita L.M."/>
            <person name="Lo R.S."/>
            <person name="Eng J.K."/>
            <person name="von Haller P.D."/>
            <person name="Fields S."/>
        </authorList>
    </citation>
    <scope>UBIQUITINATION [LARGE SCALE ANALYSIS] AT LYS-357</scope>
    <scope>IDENTIFICATION BY MASS SPECTROMETRY [LARGE SCALE ANALYSIS]</scope>
</reference>
<protein>
    <recommendedName>
        <fullName>Protein NUD1</fullName>
    </recommendedName>
</protein>
<keyword id="KW-0131">Cell cycle</keyword>
<keyword id="KW-0132">Cell division</keyword>
<keyword id="KW-0963">Cytoplasm</keyword>
<keyword id="KW-0206">Cytoskeleton</keyword>
<keyword id="KW-1017">Isopeptide bond</keyword>
<keyword id="KW-0433">Leucine-rich repeat</keyword>
<keyword id="KW-0469">Meiosis</keyword>
<keyword id="KW-0498">Mitosis</keyword>
<keyword id="KW-0539">Nucleus</keyword>
<keyword id="KW-0597">Phosphoprotein</keyword>
<keyword id="KW-1185">Reference proteome</keyword>
<keyword id="KW-0677">Repeat</keyword>
<keyword id="KW-0832">Ubl conjugation</keyword>
<dbReference type="EMBL" id="X62147">
    <property type="protein sequence ID" value="CAA44073.1"/>
    <property type="molecule type" value="Genomic_DNA"/>
</dbReference>
<dbReference type="EMBL" id="Z75281">
    <property type="protein sequence ID" value="CAA99704.1"/>
    <property type="molecule type" value="Genomic_DNA"/>
</dbReference>
<dbReference type="EMBL" id="BK006948">
    <property type="protein sequence ID" value="DAA11132.1"/>
    <property type="molecule type" value="Genomic_DNA"/>
</dbReference>
<dbReference type="PIR" id="S67285">
    <property type="entry name" value="S67285"/>
</dbReference>
<dbReference type="RefSeq" id="NP_015018.3">
    <property type="nucleotide sequence ID" value="NM_001183793.3"/>
</dbReference>
<dbReference type="SMR" id="P32336"/>
<dbReference type="BioGRID" id="34756">
    <property type="interactions" value="55"/>
</dbReference>
<dbReference type="DIP" id="DIP-2448N"/>
<dbReference type="FunCoup" id="P32336">
    <property type="interactions" value="270"/>
</dbReference>
<dbReference type="IntAct" id="P32336">
    <property type="interactions" value="26"/>
</dbReference>
<dbReference type="MINT" id="P32336"/>
<dbReference type="STRING" id="4932.YOR373W"/>
<dbReference type="iPTMnet" id="P32336"/>
<dbReference type="PaxDb" id="4932-YOR373W"/>
<dbReference type="PeptideAtlas" id="P32336"/>
<dbReference type="EnsemblFungi" id="YOR373W_mRNA">
    <property type="protein sequence ID" value="YOR373W"/>
    <property type="gene ID" value="YOR373W"/>
</dbReference>
<dbReference type="GeneID" id="854555"/>
<dbReference type="KEGG" id="sce:YOR373W"/>
<dbReference type="AGR" id="SGD:S000005900"/>
<dbReference type="SGD" id="S000005900">
    <property type="gene designation" value="NUD1"/>
</dbReference>
<dbReference type="VEuPathDB" id="FungiDB:YOR373W"/>
<dbReference type="eggNOG" id="KOG0531">
    <property type="taxonomic scope" value="Eukaryota"/>
</dbReference>
<dbReference type="HOGENOM" id="CLU_340727_0_0_1"/>
<dbReference type="InParanoid" id="P32336"/>
<dbReference type="OMA" id="TNTFKRH"/>
<dbReference type="OrthoDB" id="7451790at2759"/>
<dbReference type="BioCyc" id="YEAST:G3O-33841-MONOMER"/>
<dbReference type="BioGRID-ORCS" id="854555">
    <property type="hits" value="10 hits in 10 CRISPR screens"/>
</dbReference>
<dbReference type="CD-CODE" id="876000F7">
    <property type="entry name" value="Centrosome"/>
</dbReference>
<dbReference type="PRO" id="PR:P32336"/>
<dbReference type="Proteomes" id="UP000002311">
    <property type="component" value="Chromosome XV"/>
</dbReference>
<dbReference type="RNAct" id="P32336">
    <property type="molecule type" value="protein"/>
</dbReference>
<dbReference type="GO" id="GO:0005635">
    <property type="term" value="C:nuclear envelope"/>
    <property type="evidence" value="ECO:0007669"/>
    <property type="project" value="UniProtKB-SubCell"/>
</dbReference>
<dbReference type="GO" id="GO:0061499">
    <property type="term" value="C:outer plaque of mitotic spindle pole body"/>
    <property type="evidence" value="ECO:0000314"/>
    <property type="project" value="SGD"/>
</dbReference>
<dbReference type="GO" id="GO:0005777">
    <property type="term" value="C:peroxisome"/>
    <property type="evidence" value="ECO:0000314"/>
    <property type="project" value="SGD"/>
</dbReference>
<dbReference type="GO" id="GO:0035591">
    <property type="term" value="F:signaling adaptor activity"/>
    <property type="evidence" value="ECO:0000315"/>
    <property type="project" value="SGD"/>
</dbReference>
<dbReference type="GO" id="GO:0030953">
    <property type="term" value="P:astral microtubule organization"/>
    <property type="evidence" value="ECO:0000315"/>
    <property type="project" value="SGD"/>
</dbReference>
<dbReference type="GO" id="GO:0051301">
    <property type="term" value="P:cell division"/>
    <property type="evidence" value="ECO:0007669"/>
    <property type="project" value="UniProtKB-KW"/>
</dbReference>
<dbReference type="GO" id="GO:0051293">
    <property type="term" value="P:establishment of spindle localization"/>
    <property type="evidence" value="ECO:0000315"/>
    <property type="project" value="SGD"/>
</dbReference>
<dbReference type="GO" id="GO:0000073">
    <property type="term" value="P:initial mitotic spindle pole body separation"/>
    <property type="evidence" value="ECO:0000315"/>
    <property type="project" value="SGD"/>
</dbReference>
<dbReference type="GO" id="GO:0045132">
    <property type="term" value="P:meiotic chromosome segregation"/>
    <property type="evidence" value="ECO:0000315"/>
    <property type="project" value="SGD"/>
</dbReference>
<dbReference type="GO" id="GO:0031536">
    <property type="term" value="P:positive regulation of exit from mitosis"/>
    <property type="evidence" value="ECO:0000315"/>
    <property type="project" value="SGD"/>
</dbReference>
<dbReference type="GO" id="GO:1902412">
    <property type="term" value="P:regulation of mitotic cytokinesis"/>
    <property type="evidence" value="ECO:0000318"/>
    <property type="project" value="GO_Central"/>
</dbReference>
<dbReference type="GO" id="GO:0031028">
    <property type="term" value="P:septation initiation signaling"/>
    <property type="evidence" value="ECO:0000318"/>
    <property type="project" value="GO_Central"/>
</dbReference>
<dbReference type="Gene3D" id="3.80.10.10">
    <property type="entry name" value="Ribonuclease Inhibitor"/>
    <property type="match status" value="3"/>
</dbReference>
<dbReference type="InterPro" id="IPR052574">
    <property type="entry name" value="CDIRP"/>
</dbReference>
<dbReference type="InterPro" id="IPR001611">
    <property type="entry name" value="Leu-rich_rpt"/>
</dbReference>
<dbReference type="InterPro" id="IPR025875">
    <property type="entry name" value="Leu-rich_rpt_4"/>
</dbReference>
<dbReference type="InterPro" id="IPR032675">
    <property type="entry name" value="LRR_dom_sf"/>
</dbReference>
<dbReference type="PANTHER" id="PTHR47566">
    <property type="match status" value="1"/>
</dbReference>
<dbReference type="PANTHER" id="PTHR47566:SF1">
    <property type="entry name" value="PROTEIN NUD1"/>
    <property type="match status" value="1"/>
</dbReference>
<dbReference type="Pfam" id="PF12799">
    <property type="entry name" value="LRR_4"/>
    <property type="match status" value="1"/>
</dbReference>
<dbReference type="Pfam" id="PF13516">
    <property type="entry name" value="LRR_6"/>
    <property type="match status" value="1"/>
</dbReference>
<dbReference type="SUPFAM" id="SSF52058">
    <property type="entry name" value="L domain-like"/>
    <property type="match status" value="1"/>
</dbReference>
<dbReference type="PROSITE" id="PS51450">
    <property type="entry name" value="LRR"/>
    <property type="match status" value="9"/>
</dbReference>
<accession>P32336</accession>
<accession>D6W366</accession>
<accession>Q08895</accession>
<gene>
    <name type="primary">NUD1</name>
    <name type="ordered locus">YOR373W</name>
</gene>
<sequence>MDMDTQEAELSSQLENLTINSPRKLRSNAHSNSGKVFKEYESNHDFQDSNFTSQVVEPAISDSVKKPPTMTVLNNYSTVHQKVPSGFSGTTATSHQEAQWKQYFPGIGSGGGTNFGGAVGTANKVPESDLIVSDLVKDLSGVLETNTFKRHLDMKNKTTTMQTHENHDTISISHSKDFFNAEKVSSSFSDDSDSGPAAEAHDVFDGILQKQKSNYLVGSYPSNSNNKNNNNNNNNNNNNSININNKDNARTKEEDEEDTSNSFEFSSSSSMSSSQTQSGRKSKVLKKPPLNTISPGQLGYQFNHTHGAWDPPLNQGLDVSSSHSLDNTSSNQSQFATMVPTGDNHTNGKAPSILDKKAYELTSTKPGDVGYRQKKIQEEENLANSDDTPLDTPKFNDLFTKNGTRAKVKGQMRTSRSISNSNLLEAHKKLKTFPAERVEDITSISEVNTSFNETEKQLISILTSKLSGSPSYDSDWEKILKVDLSRGKLKNMFGMQRLLPNVLVLNLSDNEMNTLEGIPSNVVQLFCSNNKITSAHCSLAGFHDLECLDLSYNLLNTSLKFLSLCHHLQEVNLSYNSIQSLEGIGSSRMKKLNLSNNEINGIIDFEQLILTNNSVVGGWLTVEVLDLSNNNIIGVRNINCLPRLKVLNLNGNPLVSIVESSKMENGTLRALSIKNTGGALSKLQNYKLDDQFTFPYQNLKILKLDGFAQLSKWQKWPATLQILEINGGLASSLPRFSSLKSTNLYSLTIANVRDFTHLPVDLSKELPFLQELHLPGNNLQNAHKLTKTLPRQSVKFLDLRNNPITTPRHDRASTSLHYRQLLQLAGLCQQQCPALATLWLDDTPAPTATNL</sequence>
<name>NUD1_YEAST</name>
<comment type="function">
    <text evidence="4">Involved in astral microtubule organization by binding SCP72 to the outer plaque in a cell-cycle dependent manner. Required for the mitotic exit by facilitating the binding of TEMP1 to CDC15. Also involved in the pathway that organizes the shaping and sizing of the prospore membrane (PSM) during sporulation.</text>
</comment>
<comment type="subunit">
    <text evidence="3 4 5 6 7 9">Interacts directly with MPC54, CNM67, SPO21/MPC70, ADY3 and ADY4. Probable component of a spindle pole boby (SPB) complex composed of ADY3, SSP1, DON1, MPC54, SPO21/MPC70, NUD1 and CNM67.</text>
</comment>
<comment type="interaction">
    <interactant intactId="EBI-12361">
        <id>P32336</id>
    </interactant>
    <interactant intactId="EBI-34513">
        <id>Q08550</id>
        <label>MPC54</label>
    </interactant>
    <organismsDiffer>false</organismsDiffer>
    <experiments>2</experiments>
</comment>
<comment type="interaction">
    <interactant intactId="EBI-12361">
        <id>P32336</id>
    </interactant>
    <interactant intactId="EBI-36275">
        <id>Q12411</id>
        <label>SPO21</label>
    </interactant>
    <organismsDiffer>false</organismsDiffer>
    <experiments>3</experiments>
</comment>
<comment type="subcellular location">
    <subcellularLocation>
        <location evidence="2">Cytoplasm</location>
        <location evidence="2">Cytoskeleton</location>
        <location evidence="2">Microtubule organizing center</location>
        <location evidence="2">Spindle pole body</location>
    </subcellularLocation>
    <subcellularLocation>
        <location evidence="2">Nucleus envelope</location>
    </subcellularLocation>
    <text>Localizes to the meiotic outer plaque of the SPB, at the end of the meiotic spindles.</text>
</comment>
<comment type="PTM">
    <text evidence="4">Phosphorylated from S/G2 phase until the end of mitosis.</text>
</comment>
<comment type="miscellaneous">
    <text evidence="8">Present with 892 molecules/cell in log phase SD medium.</text>
</comment>